<comment type="function">
    <text evidence="1">Required for association of the cohesin complex with chromatin during interphase. Plays a role in sister chromatid cohesion and normal progression through prometaphase (By similarity).</text>
</comment>
<comment type="subunit">
    <text evidence="1">Interacts with Nipped-B to form the cohesin loading complex.</text>
</comment>
<comment type="subcellular location">
    <subcellularLocation>
        <location evidence="1">Nucleus</location>
        <location evidence="1">Nucleoplasm</location>
    </subcellularLocation>
    <text evidence="1">Binds to chromatin from the end of mitosis until prophase.</text>
</comment>
<comment type="similarity">
    <text evidence="2">Belongs to the SCC4/mau-2 family.</text>
</comment>
<comment type="sequence caution" evidence="2">
    <conflict type="frameshift">
        <sequence resource="EMBL-CDS" id="EDX12873"/>
    </conflict>
</comment>
<gene>
    <name type="ORF">GD18992</name>
</gene>
<proteinExistence type="inferred from homology"/>
<accession>B4QZ45</accession>
<organism>
    <name type="scientific">Drosophila simulans</name>
    <name type="common">Fruit fly</name>
    <dbReference type="NCBI Taxonomy" id="7240"/>
    <lineage>
        <taxon>Eukaryota</taxon>
        <taxon>Metazoa</taxon>
        <taxon>Ecdysozoa</taxon>
        <taxon>Arthropoda</taxon>
        <taxon>Hexapoda</taxon>
        <taxon>Insecta</taxon>
        <taxon>Pterygota</taxon>
        <taxon>Neoptera</taxon>
        <taxon>Endopterygota</taxon>
        <taxon>Diptera</taxon>
        <taxon>Brachycera</taxon>
        <taxon>Muscomorpha</taxon>
        <taxon>Ephydroidea</taxon>
        <taxon>Drosophilidae</taxon>
        <taxon>Drosophila</taxon>
        <taxon>Sophophora</taxon>
    </lineage>
</organism>
<reference key="1">
    <citation type="journal article" date="2007" name="Nature">
        <title>Evolution of genes and genomes on the Drosophila phylogeny.</title>
        <authorList>
            <consortium name="Drosophila 12 genomes consortium"/>
        </authorList>
    </citation>
    <scope>NUCLEOTIDE SEQUENCE [LARGE SCALE GENOMIC DNA]</scope>
</reference>
<evidence type="ECO:0000250" key="1"/>
<evidence type="ECO:0000305" key="2"/>
<sequence length="632" mass="71233">MSASTSTSTAASQDACYISLLGLAEYFRTSQPPNIKKCIQCLQALFTFMPPSKVEARTHLQMGQILMAYTKNIDLARQHLEKAWSISEPLPNFDVKFDTASLLAQLHLQTDRNSHQAKAMLRRAVELSQNNVYWHCKLLLQLSQIHASDREYSLASELLAVGAESADEASATYLKVLFLLSRAMILMIERKTNDVLALLNSAGQIIDNNIPNPHQKEYLKVFFLVLQVCYYLALGQVKTVKPSLKQLQMSIQTIMAPNWPSDETIFGANQLEMFVWLPKEQLYVLVYLVTVSHSMMAGYMDKAQKYTEKALTQIEKLKQQEDKPILSVFKVILLEHIVMCRMVMGNRELAIREIAAARDVCMAAPQRSLLRRHSAQLHCLIGLYSMSTNLFEHAERQFVVCVSETSERDLKLFANLNLAIIYLRTKRDTDLKQILDAVSTENTHTYSSQALMGGFYYVQGLHAFHKNSFHEAKRFLRETLKMANAEDLNRLTSCSLVLLSHVFLSIGNSKESMNMVTPAMQLASKIPDIHVQLWGSAILKDLHRMSKDVQHEKDAYANHVKYSENLIADQRKCVQSAHHELVNWFQGDPPVTSGPPAAPVLLMPESSVTASVPVIASTSAAMQPAGQYGQFY</sequence>
<feature type="chain" id="PRO_0000382737" description="MAU2 chromatid cohesion factor homolog">
    <location>
        <begin position="1"/>
        <end position="632"/>
    </location>
</feature>
<feature type="repeat" description="TPR 1">
    <location>
        <begin position="453"/>
        <end position="486"/>
    </location>
</feature>
<feature type="repeat" description="TPR 2">
    <location>
        <begin position="493"/>
        <end position="526"/>
    </location>
</feature>
<dbReference type="EMBL" id="CM000364">
    <property type="protein sequence ID" value="EDX12873.1"/>
    <property type="status" value="ALT_FRAME"/>
    <property type="molecule type" value="Genomic_DNA"/>
</dbReference>
<dbReference type="STRING" id="7240.B4QZ45"/>
<dbReference type="EnsemblMetazoa" id="FBtr0218902">
    <property type="protein sequence ID" value="FBpp0217394"/>
    <property type="gene ID" value="FBgn0190501"/>
</dbReference>
<dbReference type="EnsemblMetazoa" id="XM_002103334.4">
    <property type="protein sequence ID" value="XP_002103370.2"/>
    <property type="gene ID" value="LOC6728018"/>
</dbReference>
<dbReference type="GeneID" id="6728018"/>
<dbReference type="KEGG" id="dsi:Dsimw501_GD18992"/>
<dbReference type="CTD" id="23383"/>
<dbReference type="OrthoDB" id="5565328at2759"/>
<dbReference type="Proteomes" id="UP000000304">
    <property type="component" value="Chromosome 3R"/>
</dbReference>
<dbReference type="Bgee" id="FBgn0190501">
    <property type="expression patterns" value="Expressed in embryo and 3 other cell types or tissues"/>
</dbReference>
<dbReference type="GO" id="GO:0000785">
    <property type="term" value="C:chromatin"/>
    <property type="evidence" value="ECO:0000250"/>
    <property type="project" value="UniProtKB"/>
</dbReference>
<dbReference type="GO" id="GO:0005654">
    <property type="term" value="C:nucleoplasm"/>
    <property type="evidence" value="ECO:0000250"/>
    <property type="project" value="UniProtKB"/>
</dbReference>
<dbReference type="GO" id="GO:0005634">
    <property type="term" value="C:nucleus"/>
    <property type="evidence" value="ECO:0000250"/>
    <property type="project" value="UniProtKB"/>
</dbReference>
<dbReference type="GO" id="GO:0032116">
    <property type="term" value="C:SMC loading complex"/>
    <property type="evidence" value="ECO:0000250"/>
    <property type="project" value="UniProtKB"/>
</dbReference>
<dbReference type="GO" id="GO:0051301">
    <property type="term" value="P:cell division"/>
    <property type="evidence" value="ECO:0007669"/>
    <property type="project" value="UniProtKB-KW"/>
</dbReference>
<dbReference type="GO" id="GO:0007059">
    <property type="term" value="P:chromosome segregation"/>
    <property type="evidence" value="ECO:0007669"/>
    <property type="project" value="UniProtKB-KW"/>
</dbReference>
<dbReference type="GO" id="GO:0034088">
    <property type="term" value="P:maintenance of mitotic sister chromatid cohesion"/>
    <property type="evidence" value="ECO:0000250"/>
    <property type="project" value="UniProtKB"/>
</dbReference>
<dbReference type="FunFam" id="1.25.40.10:FF:000373">
    <property type="entry name" value="MAU2 chromatid cohesion factor homolog"/>
    <property type="match status" value="1"/>
</dbReference>
<dbReference type="FunFam" id="1.25.40.10:FF:000915">
    <property type="entry name" value="MAU2 chromatid cohesion factor homolog"/>
    <property type="match status" value="1"/>
</dbReference>
<dbReference type="Gene3D" id="1.25.40.10">
    <property type="entry name" value="Tetratricopeptide repeat domain"/>
    <property type="match status" value="2"/>
</dbReference>
<dbReference type="InterPro" id="IPR019440">
    <property type="entry name" value="MAU2"/>
</dbReference>
<dbReference type="InterPro" id="IPR011990">
    <property type="entry name" value="TPR-like_helical_dom_sf"/>
</dbReference>
<dbReference type="PANTHER" id="PTHR21394">
    <property type="entry name" value="MAU2 CHROMATID COHESION FACTOR HOMOLOG"/>
    <property type="match status" value="1"/>
</dbReference>
<dbReference type="Pfam" id="PF10345">
    <property type="entry name" value="Cohesin_load"/>
    <property type="match status" value="1"/>
</dbReference>
<dbReference type="SUPFAM" id="SSF48452">
    <property type="entry name" value="TPR-like"/>
    <property type="match status" value="1"/>
</dbReference>
<name>SCC4_DROSI</name>
<protein>
    <recommendedName>
        <fullName>MAU2 chromatid cohesion factor homolog</fullName>
    </recommendedName>
    <alternativeName>
        <fullName>Cohesin loading complex subunit SCC4 homolog</fullName>
    </alternativeName>
</protein>
<keyword id="KW-0131">Cell cycle</keyword>
<keyword id="KW-0132">Cell division</keyword>
<keyword id="KW-0159">Chromosome partition</keyword>
<keyword id="KW-0498">Mitosis</keyword>
<keyword id="KW-0539">Nucleus</keyword>
<keyword id="KW-1185">Reference proteome</keyword>
<keyword id="KW-0677">Repeat</keyword>
<keyword id="KW-0802">TPR repeat</keyword>